<dbReference type="EMBL" id="AF164957">
    <property type="protein sequence ID" value="AAD45381.2"/>
    <property type="molecule type" value="mRNA"/>
</dbReference>
<dbReference type="EMBL" id="AF267736">
    <property type="protein sequence ID" value="AAK15151.1"/>
    <property type="molecule type" value="mRNA"/>
</dbReference>
<dbReference type="RefSeq" id="NP_001001533.1">
    <property type="nucleotide sequence ID" value="NM_001001533.1"/>
</dbReference>
<dbReference type="SMR" id="Q9XSW2"/>
<dbReference type="FunCoup" id="Q9XSW2">
    <property type="interactions" value="182"/>
</dbReference>
<dbReference type="STRING" id="9823.ENSSSCP00000005491"/>
<dbReference type="GlyGen" id="Q9XSW2">
    <property type="glycosylation" value="1 site"/>
</dbReference>
<dbReference type="PaxDb" id="9823-ENSSSCP00000005491"/>
<dbReference type="GeneID" id="396697"/>
<dbReference type="KEGG" id="ssc:396697"/>
<dbReference type="CTD" id="2100"/>
<dbReference type="eggNOG" id="KOG3575">
    <property type="taxonomic scope" value="Eukaryota"/>
</dbReference>
<dbReference type="InParanoid" id="Q9XSW2"/>
<dbReference type="OrthoDB" id="5799427at2759"/>
<dbReference type="Proteomes" id="UP000008227">
    <property type="component" value="Unplaced"/>
</dbReference>
<dbReference type="Proteomes" id="UP000314985">
    <property type="component" value="Unplaced"/>
</dbReference>
<dbReference type="Proteomes" id="UP000694570">
    <property type="component" value="Unplaced"/>
</dbReference>
<dbReference type="Proteomes" id="UP000694571">
    <property type="component" value="Unplaced"/>
</dbReference>
<dbReference type="Proteomes" id="UP000694720">
    <property type="component" value="Unplaced"/>
</dbReference>
<dbReference type="Proteomes" id="UP000694722">
    <property type="component" value="Unplaced"/>
</dbReference>
<dbReference type="Proteomes" id="UP000694723">
    <property type="component" value="Unplaced"/>
</dbReference>
<dbReference type="Proteomes" id="UP000694724">
    <property type="component" value="Unplaced"/>
</dbReference>
<dbReference type="Proteomes" id="UP000694725">
    <property type="component" value="Unplaced"/>
</dbReference>
<dbReference type="Proteomes" id="UP000694726">
    <property type="component" value="Unplaced"/>
</dbReference>
<dbReference type="Proteomes" id="UP000694727">
    <property type="component" value="Unplaced"/>
</dbReference>
<dbReference type="Proteomes" id="UP000694728">
    <property type="component" value="Unplaced"/>
</dbReference>
<dbReference type="GO" id="GO:0000785">
    <property type="term" value="C:chromatin"/>
    <property type="evidence" value="ECO:0000318"/>
    <property type="project" value="GO_Central"/>
</dbReference>
<dbReference type="GO" id="GO:0005634">
    <property type="term" value="C:nucleus"/>
    <property type="evidence" value="ECO:0000250"/>
    <property type="project" value="UniProtKB"/>
</dbReference>
<dbReference type="GO" id="GO:0034056">
    <property type="term" value="F:estrogen response element binding"/>
    <property type="evidence" value="ECO:0000318"/>
    <property type="project" value="GO_Central"/>
</dbReference>
<dbReference type="GO" id="GO:0030284">
    <property type="term" value="F:nuclear estrogen receptor activity"/>
    <property type="evidence" value="ECO:0007669"/>
    <property type="project" value="InterPro"/>
</dbReference>
<dbReference type="GO" id="GO:0004879">
    <property type="term" value="F:nuclear receptor activity"/>
    <property type="evidence" value="ECO:0000318"/>
    <property type="project" value="GO_Central"/>
</dbReference>
<dbReference type="GO" id="GO:0005496">
    <property type="term" value="F:steroid binding"/>
    <property type="evidence" value="ECO:0000250"/>
    <property type="project" value="UniProtKB"/>
</dbReference>
<dbReference type="GO" id="GO:0008270">
    <property type="term" value="F:zinc ion binding"/>
    <property type="evidence" value="ECO:0007669"/>
    <property type="project" value="UniProtKB-KW"/>
</dbReference>
<dbReference type="GO" id="GO:0071392">
    <property type="term" value="P:cellular response to estradiol stimulus"/>
    <property type="evidence" value="ECO:0007669"/>
    <property type="project" value="InterPro"/>
</dbReference>
<dbReference type="GO" id="GO:0030520">
    <property type="term" value="P:estrogen receptor signaling pathway"/>
    <property type="evidence" value="ECO:0000318"/>
    <property type="project" value="GO_Central"/>
</dbReference>
<dbReference type="GO" id="GO:0051091">
    <property type="term" value="P:positive regulation of DNA-binding transcription factor activity"/>
    <property type="evidence" value="ECO:0000250"/>
    <property type="project" value="UniProtKB"/>
</dbReference>
<dbReference type="GO" id="GO:0045893">
    <property type="term" value="P:positive regulation of DNA-templated transcription"/>
    <property type="evidence" value="ECO:0000250"/>
    <property type="project" value="UniProtKB"/>
</dbReference>
<dbReference type="GO" id="GO:0006357">
    <property type="term" value="P:regulation of transcription by RNA polymerase II"/>
    <property type="evidence" value="ECO:0000318"/>
    <property type="project" value="GO_Central"/>
</dbReference>
<dbReference type="CDD" id="cd07171">
    <property type="entry name" value="NR_DBD_ER"/>
    <property type="match status" value="1"/>
</dbReference>
<dbReference type="CDD" id="cd06949">
    <property type="entry name" value="NR_LBD_ER"/>
    <property type="match status" value="1"/>
</dbReference>
<dbReference type="FunFam" id="1.10.565.10:FF:000010">
    <property type="entry name" value="Estrogen receptor"/>
    <property type="match status" value="1"/>
</dbReference>
<dbReference type="FunFam" id="3.30.50.10:FF:000014">
    <property type="entry name" value="Estrogen receptor beta"/>
    <property type="match status" value="1"/>
</dbReference>
<dbReference type="Gene3D" id="3.30.50.10">
    <property type="entry name" value="Erythroid Transcription Factor GATA-1, subunit A"/>
    <property type="match status" value="1"/>
</dbReference>
<dbReference type="Gene3D" id="1.10.565.10">
    <property type="entry name" value="Retinoid X Receptor"/>
    <property type="match status" value="1"/>
</dbReference>
<dbReference type="InterPro" id="IPR021064">
    <property type="entry name" value="ER-beta-like_N"/>
</dbReference>
<dbReference type="InterPro" id="IPR028355">
    <property type="entry name" value="ER-beta/gamma"/>
</dbReference>
<dbReference type="InterPro" id="IPR024178">
    <property type="entry name" value="Est_rcpt/est-rel_rcp"/>
</dbReference>
<dbReference type="InterPro" id="IPR035500">
    <property type="entry name" value="NHR-like_dom_sf"/>
</dbReference>
<dbReference type="InterPro" id="IPR000536">
    <property type="entry name" value="Nucl_hrmn_rcpt_lig-bd"/>
</dbReference>
<dbReference type="InterPro" id="IPR050200">
    <property type="entry name" value="Nuclear_hormone_rcpt_NR3"/>
</dbReference>
<dbReference type="InterPro" id="IPR001723">
    <property type="entry name" value="Nuclear_hrmn_rcpt"/>
</dbReference>
<dbReference type="InterPro" id="IPR001628">
    <property type="entry name" value="Znf_hrmn_rcpt"/>
</dbReference>
<dbReference type="InterPro" id="IPR013088">
    <property type="entry name" value="Znf_NHR/GATA"/>
</dbReference>
<dbReference type="PANTHER" id="PTHR48092">
    <property type="entry name" value="KNIRPS-RELATED PROTEIN-RELATED"/>
    <property type="match status" value="1"/>
</dbReference>
<dbReference type="Pfam" id="PF12497">
    <property type="entry name" value="ERbeta_N"/>
    <property type="match status" value="1"/>
</dbReference>
<dbReference type="Pfam" id="PF00104">
    <property type="entry name" value="Hormone_recep"/>
    <property type="match status" value="1"/>
</dbReference>
<dbReference type="Pfam" id="PF00105">
    <property type="entry name" value="zf-C4"/>
    <property type="match status" value="1"/>
</dbReference>
<dbReference type="PIRSF" id="PIRSF500102">
    <property type="entry name" value="ER-b"/>
    <property type="match status" value="1"/>
</dbReference>
<dbReference type="PIRSF" id="PIRSF002527">
    <property type="entry name" value="ER-like_NR"/>
    <property type="match status" value="1"/>
</dbReference>
<dbReference type="PRINTS" id="PR00398">
    <property type="entry name" value="STRDHORMONER"/>
</dbReference>
<dbReference type="PRINTS" id="PR00047">
    <property type="entry name" value="STROIDFINGER"/>
</dbReference>
<dbReference type="SMART" id="SM00430">
    <property type="entry name" value="HOLI"/>
    <property type="match status" value="1"/>
</dbReference>
<dbReference type="SMART" id="SM00399">
    <property type="entry name" value="ZnF_C4"/>
    <property type="match status" value="1"/>
</dbReference>
<dbReference type="SUPFAM" id="SSF57716">
    <property type="entry name" value="Glucocorticoid receptor-like (DNA-binding domain)"/>
    <property type="match status" value="1"/>
</dbReference>
<dbReference type="SUPFAM" id="SSF48508">
    <property type="entry name" value="Nuclear receptor ligand-binding domain"/>
    <property type="match status" value="1"/>
</dbReference>
<dbReference type="PROSITE" id="PS51843">
    <property type="entry name" value="NR_LBD"/>
    <property type="match status" value="1"/>
</dbReference>
<dbReference type="PROSITE" id="PS00031">
    <property type="entry name" value="NUCLEAR_REC_DBD_1"/>
    <property type="match status" value="1"/>
</dbReference>
<dbReference type="PROSITE" id="PS51030">
    <property type="entry name" value="NUCLEAR_REC_DBD_2"/>
    <property type="match status" value="1"/>
</dbReference>
<keyword id="KW-0010">Activator</keyword>
<keyword id="KW-0238">DNA-binding</keyword>
<keyword id="KW-0446">Lipid-binding</keyword>
<keyword id="KW-0479">Metal-binding</keyword>
<keyword id="KW-0539">Nucleus</keyword>
<keyword id="KW-0597">Phosphoprotein</keyword>
<keyword id="KW-0675">Receptor</keyword>
<keyword id="KW-1185">Reference proteome</keyword>
<keyword id="KW-0754">Steroid-binding</keyword>
<keyword id="KW-0804">Transcription</keyword>
<keyword id="KW-0805">Transcription regulation</keyword>
<keyword id="KW-0862">Zinc</keyword>
<keyword id="KW-0863">Zinc-finger</keyword>
<reference key="1">
    <citation type="submission" date="2001-07" db="EMBL/GenBank/DDBJ databases">
        <title>Molecular cloning of porcine estrogen receptor beta cDNAs and developmental expression in peri-implantation embryos.</title>
        <authorList>
            <person name="Kowalski A.A."/>
            <person name="Graddy L.G."/>
            <person name="Vale-Cruz D.S."/>
            <person name="Choi I."/>
            <person name="Katzenellenbogen B.S."/>
            <person name="Simmen F.A."/>
            <person name="Simmen R.C.M."/>
        </authorList>
    </citation>
    <scope>NUCLEOTIDE SEQUENCE [MRNA]</scope>
    <source>
        <tissue>Embryo</tissue>
    </source>
</reference>
<reference key="2">
    <citation type="submission" date="2001-03" db="EMBL/GenBank/DDBJ databases">
        <title>Cloning and expression of estrogen receptor beta isoforms from porcine ovary.</title>
        <authorList>
            <person name="LaVoie H.A."/>
            <person name="DeSimone D.C."/>
        </authorList>
    </citation>
    <scope>NUCLEOTIDE SEQUENCE [MRNA]</scope>
    <source>
        <tissue>Ovary</tissue>
    </source>
</reference>
<feature type="chain" id="PRO_0000053645" description="Estrogen receptor beta">
    <location>
        <begin position="1"/>
        <end position="526"/>
    </location>
</feature>
<feature type="domain" description="NR LBD" evidence="6">
    <location>
        <begin position="261"/>
        <end position="494"/>
    </location>
</feature>
<feature type="DNA-binding region" description="Nuclear receptor" evidence="5">
    <location>
        <begin position="146"/>
        <end position="211"/>
    </location>
</feature>
<feature type="zinc finger region" description="NR C4-type" evidence="5">
    <location>
        <begin position="146"/>
        <end position="166"/>
    </location>
</feature>
<feature type="zinc finger region" description="NR C4-type" evidence="5">
    <location>
        <begin position="182"/>
        <end position="206"/>
    </location>
</feature>
<feature type="region of interest" description="Modulating">
    <location>
        <begin position="1"/>
        <end position="145"/>
    </location>
</feature>
<feature type="region of interest" description="Disordered" evidence="7">
    <location>
        <begin position="502"/>
        <end position="526"/>
    </location>
</feature>
<feature type="compositionally biased region" description="Basic and acidic residues" evidence="7">
    <location>
        <begin position="507"/>
        <end position="520"/>
    </location>
</feature>
<feature type="modified residue" description="Phosphoserine; by MAPK" evidence="2">
    <location>
        <position position="84"/>
    </location>
</feature>
<feature type="modified residue" description="Phosphoserine; by MAPK" evidence="2">
    <location>
        <position position="102"/>
    </location>
</feature>
<feature type="sequence conflict" description="In Ref. 2; AAK15151." evidence="8" ref="2">
    <original>M</original>
    <variation>V</variation>
    <location>
        <position position="317"/>
    </location>
</feature>
<feature type="sequence conflict" description="In Ref. 2; AAK15151." evidence="8" ref="2">
    <original>T</original>
    <variation>M</variation>
    <location>
        <position position="469"/>
    </location>
</feature>
<name>ESR2_PIG</name>
<proteinExistence type="evidence at transcript level"/>
<evidence type="ECO:0000250" key="1"/>
<evidence type="ECO:0000250" key="2">
    <source>
        <dbReference type="UniProtKB" id="O08537"/>
    </source>
</evidence>
<evidence type="ECO:0000250" key="3">
    <source>
        <dbReference type="UniProtKB" id="Q62986"/>
    </source>
</evidence>
<evidence type="ECO:0000250" key="4">
    <source>
        <dbReference type="UniProtKB" id="Q92731"/>
    </source>
</evidence>
<evidence type="ECO:0000255" key="5">
    <source>
        <dbReference type="PROSITE-ProRule" id="PRU00407"/>
    </source>
</evidence>
<evidence type="ECO:0000255" key="6">
    <source>
        <dbReference type="PROSITE-ProRule" id="PRU01189"/>
    </source>
</evidence>
<evidence type="ECO:0000256" key="7">
    <source>
        <dbReference type="SAM" id="MobiDB-lite"/>
    </source>
</evidence>
<evidence type="ECO:0000305" key="8"/>
<organism>
    <name type="scientific">Sus scrofa</name>
    <name type="common">Pig</name>
    <dbReference type="NCBI Taxonomy" id="9823"/>
    <lineage>
        <taxon>Eukaryota</taxon>
        <taxon>Metazoa</taxon>
        <taxon>Chordata</taxon>
        <taxon>Craniata</taxon>
        <taxon>Vertebrata</taxon>
        <taxon>Euteleostomi</taxon>
        <taxon>Mammalia</taxon>
        <taxon>Eutheria</taxon>
        <taxon>Laurasiatheria</taxon>
        <taxon>Artiodactyla</taxon>
        <taxon>Suina</taxon>
        <taxon>Suidae</taxon>
        <taxon>Sus</taxon>
    </lineage>
</organism>
<protein>
    <recommendedName>
        <fullName>Estrogen receptor beta</fullName>
        <shortName>ER-beta</shortName>
    </recommendedName>
    <alternativeName>
        <fullName>Nuclear receptor subfamily 3 group A member 2</fullName>
    </alternativeName>
</protein>
<accession>Q9XSW2</accession>
<accession>Q9BDW5</accession>
<comment type="function">
    <text evidence="4">Nuclear hormone receptor. Binds estrogens with an affinity similar to that of ESR1/ER-alpha, and activates expression of reporter genes containing estrogen response elements (ERE) in an estrogen-dependent manner.</text>
</comment>
<comment type="subunit">
    <text evidence="2 3 4">Binds DNA as a homodimer. Can form a heterodimer with ESR1. Interacts with NCOA1, NCOA3, NCOA5 and NCOA6 coactivators, leading to a strong increase of transcription of target genes. Interacts with UBE1C and AKAP13. Interacts with DNTTIP2. Interacts with CCDC62 in the presence of estradiol/E2; this interaction seems to enhance the transcription of target genes. Interacts with DNAAF4. Interacts with PRMT2. Interacts with CCAR2 (via N-terminus) in a ligand-independent manner. Interacts with RBM39, in the presence of estradiol (E2). Interacts with STUB1/CHIP (By similarity).</text>
</comment>
<comment type="subcellular location">
    <subcellularLocation>
        <location evidence="4">Nucleus</location>
    </subcellularLocation>
</comment>
<comment type="domain">
    <text>Composed of three domains: a modulating N-terminal domain, a DNA-binding domain and a C-terminal ligand-binding domain.</text>
</comment>
<comment type="PTM">
    <text evidence="1">Phosphorylation at Ser-84 and Ser-102 recruits NCOA1.</text>
</comment>
<comment type="similarity">
    <text evidence="8">Belongs to the nuclear hormone receptor family. NR3 subfamily.</text>
</comment>
<gene>
    <name type="primary">ESR2</name>
    <name type="synonym">NR3A2</name>
</gene>
<sequence length="526" mass="58850">MDIKNSPSNLNSPVSYNCSQSVLPLEPGPIYIPSSYVESCHEYSAMTFYSPAVVNYSISSNSEVGPGRQATSPNVLWPTPGHLSPLAIHCQPSLLYAEPQKSPWCDTRSLEHTLPVNRETLKRKASGSSCASPVTSPSSKRDAHFCAVCSDYASGYHYGVWSCEGCKAFFKRSIQGHNDYICPATNQCTIDKNRRKSCQACRLRKCYEVGMVKCGSRRERCGYRIVRKQRNSEGHLHCLSRAKKNGDHTTRVKELLLSTLSPEQLVLTLLEAEPPHVLVSRPSTPFTEASMMMSLTKLADKELVHMISWAKKIPGFMELSLYDQVRLLESCWLEVLMVGLMWRSIDHPGKLIFAPDLVLDRDEGKCVEGILEIFDMLLATTSRFRELKLQHKEYLCVKAMILLNSSMYPSAAAQEAESSRKLTHLLNAVTDALVWVIARSGISSQQQSVRLANLLMLLSHVRHASNKGTEHLLNMKCKNVVPVYDLLLEMLNAHTLRGNKSLVTGSERSRMEESESKEGSQKPQAQ</sequence>